<feature type="signal peptide" evidence="2">
    <location>
        <begin position="1"/>
        <end position="18"/>
    </location>
</feature>
<feature type="chain" id="PRO_0000357033" description="Galectin-3-binding protein">
    <location>
        <begin position="19"/>
        <end position="555"/>
    </location>
</feature>
<feature type="domain" description="SRCR" evidence="4">
    <location>
        <begin position="24"/>
        <end position="124"/>
    </location>
</feature>
<feature type="domain" description="BTB" evidence="3">
    <location>
        <begin position="153"/>
        <end position="221"/>
    </location>
</feature>
<feature type="domain" description="BACK">
    <location>
        <begin position="260"/>
        <end position="360"/>
    </location>
</feature>
<feature type="glycosylation site" description="N-linked (GlcNAc...) asparagine">
    <location>
        <position position="69"/>
    </location>
</feature>
<feature type="glycosylation site" description="N-linked (GlcNAc...) asparagine">
    <location>
        <position position="125"/>
    </location>
</feature>
<feature type="glycosylation site" description="N-linked (GlcNAc...) asparagine">
    <location>
        <position position="362"/>
    </location>
</feature>
<feature type="glycosylation site" description="N-linked (GlcNAc...) asparagine">
    <location>
        <position position="398"/>
    </location>
</feature>
<feature type="glycosylation site" description="N-linked (GlcNAc...) asparagine">
    <location>
        <position position="550"/>
    </location>
</feature>
<feature type="disulfide bond" evidence="4">
    <location>
        <begin position="49"/>
        <end position="113"/>
    </location>
</feature>
<feature type="disulfide bond" evidence="4">
    <location>
        <begin position="62"/>
        <end position="123"/>
    </location>
</feature>
<feature type="disulfide bond" evidence="4">
    <location>
        <begin position="93"/>
        <end position="103"/>
    </location>
</feature>
<feature type="sequence conflict" description="In Ref. 2; AAI05368." evidence="5" ref="2">
    <original>L</original>
    <variation>F</variation>
    <location>
        <position position="230"/>
    </location>
</feature>
<feature type="sequence conflict" description="In Ref. 2; AAI05368." evidence="5" ref="2">
    <original>P</original>
    <variation>T</variation>
    <location>
        <position position="273"/>
    </location>
</feature>
<feature type="sequence conflict" description="In Ref. 2; AAI05368." evidence="5" ref="2">
    <original>R</original>
    <variation>H</variation>
    <location>
        <position position="333"/>
    </location>
</feature>
<organism>
    <name type="scientific">Bos taurus</name>
    <name type="common">Bovine</name>
    <dbReference type="NCBI Taxonomy" id="9913"/>
    <lineage>
        <taxon>Eukaryota</taxon>
        <taxon>Metazoa</taxon>
        <taxon>Chordata</taxon>
        <taxon>Craniata</taxon>
        <taxon>Vertebrata</taxon>
        <taxon>Euteleostomi</taxon>
        <taxon>Mammalia</taxon>
        <taxon>Eutheria</taxon>
        <taxon>Laurasiatheria</taxon>
        <taxon>Artiodactyla</taxon>
        <taxon>Ruminantia</taxon>
        <taxon>Pecora</taxon>
        <taxon>Bovidae</taxon>
        <taxon>Bovinae</taxon>
        <taxon>Bos</taxon>
    </lineage>
</organism>
<evidence type="ECO:0000250" key="1">
    <source>
        <dbReference type="UniProtKB" id="Q08380"/>
    </source>
</evidence>
<evidence type="ECO:0000255" key="2"/>
<evidence type="ECO:0000255" key="3">
    <source>
        <dbReference type="PROSITE-ProRule" id="PRU00037"/>
    </source>
</evidence>
<evidence type="ECO:0000255" key="4">
    <source>
        <dbReference type="PROSITE-ProRule" id="PRU00196"/>
    </source>
</evidence>
<evidence type="ECO:0000305" key="5"/>
<reference key="1">
    <citation type="journal article" date="2005" name="BMC Genomics">
        <title>Characterization of 954 bovine full-CDS cDNA sequences.</title>
        <authorList>
            <person name="Harhay G.P."/>
            <person name="Sonstegard T.S."/>
            <person name="Keele J.W."/>
            <person name="Heaton M.P."/>
            <person name="Clawson M.L."/>
            <person name="Snelling W.M."/>
            <person name="Wiedmann R.T."/>
            <person name="Van Tassell C.P."/>
            <person name="Smith T.P.L."/>
        </authorList>
    </citation>
    <scope>NUCLEOTIDE SEQUENCE [LARGE SCALE MRNA]</scope>
</reference>
<reference key="2">
    <citation type="submission" date="2005-09" db="EMBL/GenBank/DDBJ databases">
        <authorList>
            <consortium name="NIH - Mammalian Gene Collection (MGC) project"/>
        </authorList>
    </citation>
    <scope>NUCLEOTIDE SEQUENCE [LARGE SCALE MRNA]</scope>
    <source>
        <strain>Crossbred X Angus</strain>
        <tissue>Ileum</tissue>
    </source>
</reference>
<dbReference type="EMBL" id="BT030733">
    <property type="protein sequence ID" value="ABS45049.1"/>
    <property type="molecule type" value="mRNA"/>
</dbReference>
<dbReference type="EMBL" id="BC105367">
    <property type="protein sequence ID" value="AAI05368.1"/>
    <property type="molecule type" value="mRNA"/>
</dbReference>
<dbReference type="RefSeq" id="NP_001039781.1">
    <property type="nucleotide sequence ID" value="NM_001046316.2"/>
</dbReference>
<dbReference type="RefSeq" id="XP_005221293.1">
    <property type="nucleotide sequence ID" value="XM_005221236.1"/>
</dbReference>
<dbReference type="SMR" id="A7E3W2"/>
<dbReference type="FunCoup" id="A7E3W2">
    <property type="interactions" value="149"/>
</dbReference>
<dbReference type="STRING" id="9913.ENSBTAP00000001802"/>
<dbReference type="GlyCosmos" id="A7E3W2">
    <property type="glycosylation" value="5 sites, No reported glycans"/>
</dbReference>
<dbReference type="GlyGen" id="A7E3W2">
    <property type="glycosylation" value="5 sites"/>
</dbReference>
<dbReference type="PaxDb" id="9913-ENSBTAP00000001802"/>
<dbReference type="GeneID" id="531137"/>
<dbReference type="KEGG" id="bta:531137"/>
<dbReference type="CTD" id="3959"/>
<dbReference type="VEuPathDB" id="HostDB:ENSBTAG00000001368"/>
<dbReference type="eggNOG" id="ENOG502QU48">
    <property type="taxonomic scope" value="Eukaryota"/>
</dbReference>
<dbReference type="HOGENOM" id="CLU_032646_0_0_1"/>
<dbReference type="InParanoid" id="A7E3W2"/>
<dbReference type="OMA" id="LMLCGGR"/>
<dbReference type="OrthoDB" id="25028at2759"/>
<dbReference type="TreeFam" id="TF331368"/>
<dbReference type="Reactome" id="R-BTA-114608">
    <property type="pathway name" value="Platelet degranulation"/>
</dbReference>
<dbReference type="Proteomes" id="UP000009136">
    <property type="component" value="Chromosome 19"/>
</dbReference>
<dbReference type="Bgee" id="ENSBTAG00000001368">
    <property type="expression patterns" value="Expressed in granulosa cell and 102 other cell types or tissues"/>
</dbReference>
<dbReference type="GO" id="GO:0005615">
    <property type="term" value="C:extracellular space"/>
    <property type="evidence" value="ECO:0000318"/>
    <property type="project" value="GO_Central"/>
</dbReference>
<dbReference type="GO" id="GO:0016020">
    <property type="term" value="C:membrane"/>
    <property type="evidence" value="ECO:0007669"/>
    <property type="project" value="InterPro"/>
</dbReference>
<dbReference type="GO" id="GO:0007155">
    <property type="term" value="P:cell adhesion"/>
    <property type="evidence" value="ECO:0007669"/>
    <property type="project" value="UniProtKB-KW"/>
</dbReference>
<dbReference type="FunFam" id="1.25.40.420:FF:000027">
    <property type="entry name" value="galectin-3-binding protein isoform X2"/>
    <property type="match status" value="1"/>
</dbReference>
<dbReference type="FunFam" id="3.30.710.10:FF:000128">
    <property type="entry name" value="galectin-3-binding protein precursor"/>
    <property type="match status" value="1"/>
</dbReference>
<dbReference type="FunFam" id="3.10.250.10:FF:000005">
    <property type="entry name" value="Neurotrypsin isoform A"/>
    <property type="match status" value="1"/>
</dbReference>
<dbReference type="Gene3D" id="1.25.40.420">
    <property type="match status" value="1"/>
</dbReference>
<dbReference type="Gene3D" id="3.30.710.10">
    <property type="entry name" value="Potassium Channel Kv1.1, Chain A"/>
    <property type="match status" value="1"/>
</dbReference>
<dbReference type="Gene3D" id="3.10.250.10">
    <property type="entry name" value="SRCR-like domain"/>
    <property type="match status" value="1"/>
</dbReference>
<dbReference type="InterPro" id="IPR011705">
    <property type="entry name" value="BACK"/>
</dbReference>
<dbReference type="InterPro" id="IPR051481">
    <property type="entry name" value="BTB-POZ/Galectin-3-binding"/>
</dbReference>
<dbReference type="InterPro" id="IPR000210">
    <property type="entry name" value="BTB/POZ_dom"/>
</dbReference>
<dbReference type="InterPro" id="IPR011333">
    <property type="entry name" value="SKP1/BTB/POZ_sf"/>
</dbReference>
<dbReference type="InterPro" id="IPR001190">
    <property type="entry name" value="SRCR"/>
</dbReference>
<dbReference type="InterPro" id="IPR036772">
    <property type="entry name" value="SRCR-like_dom_sf"/>
</dbReference>
<dbReference type="PANTHER" id="PTHR24410:SF16">
    <property type="entry name" value="GALECTIN-3-BINDING PROTEIN"/>
    <property type="match status" value="1"/>
</dbReference>
<dbReference type="PANTHER" id="PTHR24410">
    <property type="entry name" value="HL07962P-RELATED"/>
    <property type="match status" value="1"/>
</dbReference>
<dbReference type="Pfam" id="PF07707">
    <property type="entry name" value="BACK"/>
    <property type="match status" value="1"/>
</dbReference>
<dbReference type="Pfam" id="PF00530">
    <property type="entry name" value="SRCR"/>
    <property type="match status" value="1"/>
</dbReference>
<dbReference type="PRINTS" id="PR00258">
    <property type="entry name" value="SPERACTRCPTR"/>
</dbReference>
<dbReference type="SMART" id="SM00875">
    <property type="entry name" value="BACK"/>
    <property type="match status" value="1"/>
</dbReference>
<dbReference type="SMART" id="SM00202">
    <property type="entry name" value="SR"/>
    <property type="match status" value="1"/>
</dbReference>
<dbReference type="SUPFAM" id="SSF54695">
    <property type="entry name" value="POZ domain"/>
    <property type="match status" value="1"/>
</dbReference>
<dbReference type="SUPFAM" id="SSF56487">
    <property type="entry name" value="SRCR-like"/>
    <property type="match status" value="1"/>
</dbReference>
<dbReference type="PROSITE" id="PS50097">
    <property type="entry name" value="BTB"/>
    <property type="match status" value="1"/>
</dbReference>
<dbReference type="PROSITE" id="PS00420">
    <property type="entry name" value="SRCR_1"/>
    <property type="match status" value="1"/>
</dbReference>
<dbReference type="PROSITE" id="PS50287">
    <property type="entry name" value="SRCR_2"/>
    <property type="match status" value="1"/>
</dbReference>
<gene>
    <name type="primary">LGALS3BP</name>
</gene>
<protein>
    <recommendedName>
        <fullName>Galectin-3-binding protein</fullName>
    </recommendedName>
    <alternativeName>
        <fullName>Lectin galactoside-binding soluble 3-binding protein</fullName>
    </alternativeName>
</protein>
<keyword id="KW-0130">Cell adhesion</keyword>
<keyword id="KW-1015">Disulfide bond</keyword>
<keyword id="KW-0272">Extracellular matrix</keyword>
<keyword id="KW-0325">Glycoprotein</keyword>
<keyword id="KW-1185">Reference proteome</keyword>
<keyword id="KW-0964">Secreted</keyword>
<keyword id="KW-0732">Signal</keyword>
<comment type="function">
    <text evidence="1">Promotes integrin-mediated cell adhesion. May stimulate host defense against viruses and tumor cells (By similarity).</text>
</comment>
<comment type="subunit">
    <text evidence="1">Homodimers and homomultimers. The multimers form ring-like structures with a diameter of 30-40 nm. Binds LGALS1 and LGALS3. Binds ITGB1, COL4A1, COL5A1, COL6A1, FN1 and NID (By similarity). Interacts with the gamma-tubulin ring complex (gamma-TuRC), composed of gamma-tubulin, TUBGCP2, TUBGCP3, TUBGCP4, TUBGCP5 and TUBGCP6. The unglycosylated form interacts with PDE4DIP; this interaction, which is PDE4DIP isoform-specific, may connect a pericentrosomal complex, made of AKAP9, CDK5RAP2, EB1/MAPRE1 and PDE4DIP, to the gamma-tubulin ring complex (gamma-TuRC) to promote microtubule assembly and acetylation (By similarity).</text>
</comment>
<comment type="subcellular location">
    <subcellularLocation>
        <location evidence="1">Secreted</location>
    </subcellularLocation>
    <subcellularLocation>
        <location evidence="1">Secreted</location>
        <location evidence="1">Extracellular space</location>
        <location evidence="1">Extracellular matrix</location>
    </subcellularLocation>
</comment>
<sequence length="555" mass="62127">MAPLRLFWIWLLVVGTRGVKDGDMRLADGGSANQGRVEIYYNGQWGTVCENMWDLTDASVVCRALGFQNATEALGGAAFGPGYGPIMLDEVRCTGTEPSLANCSSLGWMRSNCRHDKDASVICTNETRGVYTLDLSGELPAALEQIFESQKGCDLFITVKVREEDEIAMCAHKLILSTNPEAHGLWKEPGSRVTMEVDAECVPVVKDFIRYLYSRRIDVSLSSVKCLHKLASAYQAKQLQSYCGHLFAILIPQDPSFWTPLELYAYALATRDPVLEEICVQFLAWNFGALTQAEAWPSVPPALLQGLLSRTELVVPSELVLLLAVDKWSQERRTSHKEVEALVGQVRFPMMPPQDLFSLQFNLSLYWSHEALFQKKILQALEFHTVPFELLAQYWGLNLTEGTYQPRLYTSPTWSQSVMSSSYNPSRSFQTPQHPSFLFHDSSVSWSFVYLPTLQSCWNYGFSCSSDDPPLLALSKSSYSKSNPTIGYENRALLHCEGSFVVDVIDFKGWKALVPSALATNSSRSTSLFPCPSGVFSRFQVVIRPFYLTNSTDMD</sequence>
<accession>A7E3W2</accession>
<accession>Q2KJF4</accession>
<proteinExistence type="evidence at protein level"/>
<name>LG3BP_BOVIN</name>